<accession>Q7TPB4</accession>
<dbReference type="EMBL" id="AY190319">
    <property type="protein sequence ID" value="AAP04008.1"/>
    <property type="molecule type" value="mRNA"/>
</dbReference>
<dbReference type="EMBL" id="BC100064">
    <property type="protein sequence ID" value="AAI00065.1"/>
    <property type="molecule type" value="mRNA"/>
</dbReference>
<dbReference type="RefSeq" id="NP_877976.1">
    <property type="nucleotide sequence ID" value="NM_182824.2"/>
</dbReference>
<dbReference type="SMR" id="Q7TPB4"/>
<dbReference type="BioGRID" id="261125">
    <property type="interactions" value="1"/>
</dbReference>
<dbReference type="FunCoup" id="Q7TPB4">
    <property type="interactions" value="584"/>
</dbReference>
<dbReference type="STRING" id="10116.ENSRNOP00000049249"/>
<dbReference type="GlyCosmos" id="Q7TPB4">
    <property type="glycosylation" value="3 sites, No reported glycans"/>
</dbReference>
<dbReference type="GlyGen" id="Q7TPB4">
    <property type="glycosylation" value="3 sites"/>
</dbReference>
<dbReference type="PhosphoSitePlus" id="Q7TPB4"/>
<dbReference type="SwissPalm" id="Q7TPB4"/>
<dbReference type="jPOST" id="Q7TPB4"/>
<dbReference type="PaxDb" id="10116-ENSRNOP00000049249"/>
<dbReference type="GeneID" id="315716"/>
<dbReference type="KEGG" id="rno:315716"/>
<dbReference type="UCSC" id="RGD:727815">
    <property type="organism name" value="rat"/>
</dbReference>
<dbReference type="AGR" id="RGD:727815"/>
<dbReference type="CTD" id="80381"/>
<dbReference type="RGD" id="727815">
    <property type="gene designation" value="Cd276"/>
</dbReference>
<dbReference type="VEuPathDB" id="HostDB:ENSRNOG00000033608"/>
<dbReference type="eggNOG" id="ENOG502QU94">
    <property type="taxonomic scope" value="Eukaryota"/>
</dbReference>
<dbReference type="HOGENOM" id="CLU_013137_8_1_1"/>
<dbReference type="InParanoid" id="Q7TPB4"/>
<dbReference type="OrthoDB" id="8897154at2759"/>
<dbReference type="PhylomeDB" id="Q7TPB4"/>
<dbReference type="TreeFam" id="TF331083"/>
<dbReference type="PRO" id="PR:Q7TPB4"/>
<dbReference type="Proteomes" id="UP000002494">
    <property type="component" value="Chromosome 8"/>
</dbReference>
<dbReference type="Bgee" id="ENSRNOG00000033608">
    <property type="expression patterns" value="Expressed in ovary and 19 other cell types or tissues"/>
</dbReference>
<dbReference type="GO" id="GO:0009897">
    <property type="term" value="C:external side of plasma membrane"/>
    <property type="evidence" value="ECO:0000266"/>
    <property type="project" value="RGD"/>
</dbReference>
<dbReference type="GO" id="GO:0042802">
    <property type="term" value="F:identical protein binding"/>
    <property type="evidence" value="ECO:0000266"/>
    <property type="project" value="RGD"/>
</dbReference>
<dbReference type="GO" id="GO:0005102">
    <property type="term" value="F:signaling receptor binding"/>
    <property type="evidence" value="ECO:0000266"/>
    <property type="project" value="RGD"/>
</dbReference>
<dbReference type="GO" id="GO:0050728">
    <property type="term" value="P:negative regulation of inflammatory response"/>
    <property type="evidence" value="ECO:0000266"/>
    <property type="project" value="RGD"/>
</dbReference>
<dbReference type="GO" id="GO:0032703">
    <property type="term" value="P:negative regulation of interleukin-2 production"/>
    <property type="evidence" value="ECO:0000266"/>
    <property type="project" value="RGD"/>
</dbReference>
<dbReference type="GO" id="GO:0042130">
    <property type="term" value="P:negative regulation of T cell proliferation"/>
    <property type="evidence" value="ECO:0000266"/>
    <property type="project" value="RGD"/>
</dbReference>
<dbReference type="GO" id="GO:0032689">
    <property type="term" value="P:negative regulation of type II interferon production"/>
    <property type="evidence" value="ECO:0000266"/>
    <property type="project" value="RGD"/>
</dbReference>
<dbReference type="GO" id="GO:0030501">
    <property type="term" value="P:positive regulation of bone mineralization"/>
    <property type="evidence" value="ECO:0000266"/>
    <property type="project" value="RGD"/>
</dbReference>
<dbReference type="GO" id="GO:0032743">
    <property type="term" value="P:positive regulation of interleukin-2 production"/>
    <property type="evidence" value="ECO:0000266"/>
    <property type="project" value="RGD"/>
</dbReference>
<dbReference type="GO" id="GO:0045669">
    <property type="term" value="P:positive regulation of osteoblast differentiation"/>
    <property type="evidence" value="ECO:0000266"/>
    <property type="project" value="RGD"/>
</dbReference>
<dbReference type="GO" id="GO:0042102">
    <property type="term" value="P:positive regulation of T cell proliferation"/>
    <property type="evidence" value="ECO:0000266"/>
    <property type="project" value="RGD"/>
</dbReference>
<dbReference type="GO" id="GO:0032729">
    <property type="term" value="P:positive regulation of type II interferon production"/>
    <property type="evidence" value="ECO:0000266"/>
    <property type="project" value="RGD"/>
</dbReference>
<dbReference type="GO" id="GO:0001817">
    <property type="term" value="P:regulation of cytokine production"/>
    <property type="evidence" value="ECO:0000318"/>
    <property type="project" value="GO_Central"/>
</dbReference>
<dbReference type="GO" id="GO:0050776">
    <property type="term" value="P:regulation of immune response"/>
    <property type="evidence" value="ECO:0000266"/>
    <property type="project" value="RGD"/>
</dbReference>
<dbReference type="GO" id="GO:0042110">
    <property type="term" value="P:T cell activation"/>
    <property type="evidence" value="ECO:0000266"/>
    <property type="project" value="RGD"/>
</dbReference>
<dbReference type="GO" id="GO:0042098">
    <property type="term" value="P:T cell proliferation"/>
    <property type="evidence" value="ECO:0000266"/>
    <property type="project" value="RGD"/>
</dbReference>
<dbReference type="GO" id="GO:0050852">
    <property type="term" value="P:T cell receptor signaling pathway"/>
    <property type="evidence" value="ECO:0000318"/>
    <property type="project" value="GO_Central"/>
</dbReference>
<dbReference type="CDD" id="cd00096">
    <property type="entry name" value="Ig"/>
    <property type="match status" value="1"/>
</dbReference>
<dbReference type="CDD" id="cd20934">
    <property type="entry name" value="IgV_B7-H3"/>
    <property type="match status" value="1"/>
</dbReference>
<dbReference type="FunFam" id="2.60.40.10:FF:000438">
    <property type="entry name" value="CD276 antigen"/>
    <property type="match status" value="1"/>
</dbReference>
<dbReference type="FunFam" id="2.60.40.10:FF:000499">
    <property type="entry name" value="CD276 antigen"/>
    <property type="match status" value="1"/>
</dbReference>
<dbReference type="Gene3D" id="2.60.40.10">
    <property type="entry name" value="Immunoglobulins"/>
    <property type="match status" value="2"/>
</dbReference>
<dbReference type="InterPro" id="IPR053896">
    <property type="entry name" value="BTN3A2-like_Ig-C"/>
</dbReference>
<dbReference type="InterPro" id="IPR047318">
    <property type="entry name" value="CD276_IgV"/>
</dbReference>
<dbReference type="InterPro" id="IPR007110">
    <property type="entry name" value="Ig-like_dom"/>
</dbReference>
<dbReference type="InterPro" id="IPR036179">
    <property type="entry name" value="Ig-like_dom_sf"/>
</dbReference>
<dbReference type="InterPro" id="IPR013783">
    <property type="entry name" value="Ig-like_fold"/>
</dbReference>
<dbReference type="InterPro" id="IPR003599">
    <property type="entry name" value="Ig_sub"/>
</dbReference>
<dbReference type="InterPro" id="IPR003598">
    <property type="entry name" value="Ig_sub2"/>
</dbReference>
<dbReference type="InterPro" id="IPR013106">
    <property type="entry name" value="Ig_V-set"/>
</dbReference>
<dbReference type="InterPro" id="IPR050504">
    <property type="entry name" value="IgSF_BTN/MOG"/>
</dbReference>
<dbReference type="PANTHER" id="PTHR24100">
    <property type="entry name" value="BUTYROPHILIN"/>
    <property type="match status" value="1"/>
</dbReference>
<dbReference type="PANTHER" id="PTHR24100:SF155">
    <property type="entry name" value="CD276 ANTIGEN"/>
    <property type="match status" value="1"/>
</dbReference>
<dbReference type="Pfam" id="PF22705">
    <property type="entry name" value="C2-set_3"/>
    <property type="match status" value="1"/>
</dbReference>
<dbReference type="Pfam" id="PF07686">
    <property type="entry name" value="V-set"/>
    <property type="match status" value="1"/>
</dbReference>
<dbReference type="SMART" id="SM00409">
    <property type="entry name" value="IG"/>
    <property type="match status" value="2"/>
</dbReference>
<dbReference type="SMART" id="SM00408">
    <property type="entry name" value="IGc2"/>
    <property type="match status" value="2"/>
</dbReference>
<dbReference type="SMART" id="SM00406">
    <property type="entry name" value="IGv"/>
    <property type="match status" value="1"/>
</dbReference>
<dbReference type="SUPFAM" id="SSF48726">
    <property type="entry name" value="Immunoglobulin"/>
    <property type="match status" value="2"/>
</dbReference>
<dbReference type="PROSITE" id="PS50835">
    <property type="entry name" value="IG_LIKE"/>
    <property type="match status" value="2"/>
</dbReference>
<name>CD276_RAT</name>
<sequence length="316" mass="34075">MLRGWGGPSVGVSMGTALGVLCLCLTGAVEVQVSEDPVVALVDTDATLRCSFSPEPGFSLRQLNLIWQLTDTKQLVHSFTEGRDQGSAYANRTALFPDLLVQGNASLRLQRVRVTDEGSYTCFVSIQDFDSAAVSLQVAAPYSKPSMTLEPNKDLRPGDMVTITCSSYQGYPEAEVFWKDGQGLPLTGNVTTSQMANERGLFDVHSVLRVVLGANGTYSCLVRNPVLQQDAHGSVTITGQPMTFPPEALWVTVGLSVCLVILLVALAFVCWRKIKQSCEEENAGAEDQDGDGEGSKTALRPLKHSENKEDDGQEIA</sequence>
<protein>
    <recommendedName>
        <fullName>CD276 antigen</fullName>
    </recommendedName>
    <alternativeName>
        <fullName>B7 homolog 3</fullName>
        <shortName>B7-H3</shortName>
    </alternativeName>
    <alternativeName>
        <fullName>Costimulatory molecule</fullName>
    </alternativeName>
    <cdAntigenName>CD276</cdAntigenName>
</protein>
<proteinExistence type="evidence at transcript level"/>
<evidence type="ECO:0000250" key="1"/>
<evidence type="ECO:0000255" key="2"/>
<evidence type="ECO:0000255" key="3">
    <source>
        <dbReference type="PROSITE-ProRule" id="PRU00114"/>
    </source>
</evidence>
<evidence type="ECO:0000256" key="4">
    <source>
        <dbReference type="SAM" id="MobiDB-lite"/>
    </source>
</evidence>
<evidence type="ECO:0000305" key="5"/>
<feature type="signal peptide" evidence="2">
    <location>
        <begin position="1"/>
        <end position="28"/>
    </location>
</feature>
<feature type="chain" id="PRO_0000045803" description="CD276 antigen">
    <location>
        <begin position="29"/>
        <end position="316"/>
    </location>
</feature>
<feature type="topological domain" description="Extracellular" evidence="2">
    <location>
        <begin position="29"/>
        <end position="248"/>
    </location>
</feature>
<feature type="transmembrane region" description="Helical" evidence="2">
    <location>
        <begin position="249"/>
        <end position="269"/>
    </location>
</feature>
<feature type="topological domain" description="Cytoplasmic" evidence="2">
    <location>
        <begin position="270"/>
        <end position="316"/>
    </location>
</feature>
<feature type="domain" description="Ig-like V-type">
    <location>
        <begin position="29"/>
        <end position="139"/>
    </location>
</feature>
<feature type="domain" description="Ig-like C2-type">
    <location>
        <begin position="145"/>
        <end position="238"/>
    </location>
</feature>
<feature type="region of interest" description="Disordered" evidence="4">
    <location>
        <begin position="281"/>
        <end position="316"/>
    </location>
</feature>
<feature type="compositionally biased region" description="Acidic residues" evidence="4">
    <location>
        <begin position="281"/>
        <end position="292"/>
    </location>
</feature>
<feature type="glycosylation site" description="N-linked (GlcNAc...) asparagine" evidence="2">
    <location>
        <position position="104"/>
    </location>
</feature>
<feature type="glycosylation site" description="N-linked (GlcNAc...) asparagine" evidence="2">
    <location>
        <position position="189"/>
    </location>
</feature>
<feature type="glycosylation site" description="N-linked (GlcNAc...) asparagine" evidence="2">
    <location>
        <position position="215"/>
    </location>
</feature>
<feature type="disulfide bond" evidence="3">
    <location>
        <begin position="165"/>
        <end position="220"/>
    </location>
</feature>
<gene>
    <name type="primary">Cd276</name>
    <name type="synonym">B7h3</name>
</gene>
<reference key="1">
    <citation type="journal article" date="2003" name="Nat. Immunol.">
        <title>The B7 family member B7-H3 preferentially down-regulates T helper type 1-mediated immune responses.</title>
        <authorList>
            <person name="Suh W.-K."/>
            <person name="Gajewska B.U."/>
            <person name="Okada H."/>
            <person name="Gronski M.A."/>
            <person name="Bertram E.M."/>
            <person name="Dawicki W."/>
            <person name="Duncan G.S."/>
            <person name="Bukczynski J."/>
            <person name="Plyte S."/>
            <person name="Elia A."/>
            <person name="Wakeham A."/>
            <person name="Itie A."/>
            <person name="Chung S."/>
            <person name="Da Costa J."/>
            <person name="Arya S."/>
            <person name="Horan T."/>
            <person name="Campbell P."/>
            <person name="Gaida K."/>
            <person name="Ohashi P.S."/>
            <person name="Watts T.H."/>
            <person name="Yoshinaga S.K."/>
            <person name="Bray M.R."/>
            <person name="Jordana M."/>
            <person name="Mak T.W."/>
        </authorList>
    </citation>
    <scope>NUCLEOTIDE SEQUENCE [MRNA]</scope>
</reference>
<reference key="2">
    <citation type="journal article" date="2004" name="Genome Res.">
        <title>The status, quality, and expansion of the NIH full-length cDNA project: the Mammalian Gene Collection (MGC).</title>
        <authorList>
            <consortium name="The MGC Project Team"/>
        </authorList>
    </citation>
    <scope>NUCLEOTIDE SEQUENCE [LARGE SCALE MRNA]</scope>
    <source>
        <tissue>Heart</tissue>
    </source>
</reference>
<comment type="function">
    <text evidence="1">Modulates T-cell-mediated immune responses and the development of acute and chronic transplant rejection. May play a positive regulatory role in bone formation and has a dual role in the bone-immune interface. Induces antitumor immunity as it activates both acquired and innate immunity leading to natural killer cell and CD8 T-cell dependent killing of tumor cells (By similarity).</text>
</comment>
<comment type="subunit">
    <text evidence="1">Interacts with TREML2 and this interaction enhances T-cell activation.</text>
</comment>
<comment type="subcellular location">
    <subcellularLocation>
        <location evidence="5">Membrane</location>
        <topology evidence="5">Single-pass type I membrane protein</topology>
    </subcellularLocation>
</comment>
<comment type="similarity">
    <text evidence="5">Belongs to the immunoglobulin superfamily. BTN/MOG family.</text>
</comment>
<keyword id="KW-1015">Disulfide bond</keyword>
<keyword id="KW-0325">Glycoprotein</keyword>
<keyword id="KW-0393">Immunoglobulin domain</keyword>
<keyword id="KW-0472">Membrane</keyword>
<keyword id="KW-1185">Reference proteome</keyword>
<keyword id="KW-0732">Signal</keyword>
<keyword id="KW-0812">Transmembrane</keyword>
<keyword id="KW-1133">Transmembrane helix</keyword>
<organism>
    <name type="scientific">Rattus norvegicus</name>
    <name type="common">Rat</name>
    <dbReference type="NCBI Taxonomy" id="10116"/>
    <lineage>
        <taxon>Eukaryota</taxon>
        <taxon>Metazoa</taxon>
        <taxon>Chordata</taxon>
        <taxon>Craniata</taxon>
        <taxon>Vertebrata</taxon>
        <taxon>Euteleostomi</taxon>
        <taxon>Mammalia</taxon>
        <taxon>Eutheria</taxon>
        <taxon>Euarchontoglires</taxon>
        <taxon>Glires</taxon>
        <taxon>Rodentia</taxon>
        <taxon>Myomorpha</taxon>
        <taxon>Muroidea</taxon>
        <taxon>Muridae</taxon>
        <taxon>Murinae</taxon>
        <taxon>Rattus</taxon>
    </lineage>
</organism>